<feature type="chain" id="PRO_0000360685" description="Uncharacterized sugar transferase EpsL">
    <location>
        <begin position="1"/>
        <end position="202"/>
    </location>
</feature>
<feature type="transmembrane region" description="Helical" evidence="1">
    <location>
        <begin position="10"/>
        <end position="30"/>
    </location>
</feature>
<keyword id="KW-1003">Cell membrane</keyword>
<keyword id="KW-0270">Exopolysaccharide synthesis</keyword>
<keyword id="KW-0472">Membrane</keyword>
<keyword id="KW-1185">Reference proteome</keyword>
<keyword id="KW-0808">Transferase</keyword>
<keyword id="KW-0812">Transmembrane</keyword>
<keyword id="KW-1133">Transmembrane helix</keyword>
<comment type="function">
    <text>May be involved in the production of the exopolysaccharide (EPS) component of the extracellular matrix during biofilm formation. EPS is responsible for the adhesion of chains of cells into bundles.</text>
</comment>
<comment type="subcellular location">
    <subcellularLocation>
        <location evidence="3">Cell membrane</location>
        <topology evidence="3">Single-pass membrane protein</topology>
    </subcellularLocation>
</comment>
<comment type="induction">
    <text evidence="2">Repressed by SinR.</text>
</comment>
<comment type="similarity">
    <text evidence="3">Belongs to the bacterial sugar transferase family.</text>
</comment>
<reference key="1">
    <citation type="journal article" date="1996" name="Microbiology">
        <title>Integrated mapping and sequencing of a 115 kb DNA fragment from Bacillus subtilis: sequence analysis of a 21 kb segment containing the sigL locus.</title>
        <authorList>
            <person name="Fabret C."/>
            <person name="Quentin Y."/>
            <person name="Chapal N."/>
            <person name="Guiseppi A."/>
            <person name="Haiech J."/>
            <person name="Denizot F."/>
        </authorList>
    </citation>
    <scope>NUCLEOTIDE SEQUENCE [GENOMIC DNA]</scope>
    <source>
        <strain>168</strain>
    </source>
</reference>
<reference key="2">
    <citation type="submission" date="1997-04" db="EMBL/GenBank/DDBJ databases">
        <authorList>
            <person name="Denizot F."/>
        </authorList>
    </citation>
    <scope>NUCLEOTIDE SEQUENCE [GENOMIC DNA]</scope>
    <source>
        <strain>168</strain>
    </source>
</reference>
<reference key="3">
    <citation type="journal article" date="1997" name="Nature">
        <title>The complete genome sequence of the Gram-positive bacterium Bacillus subtilis.</title>
        <authorList>
            <person name="Kunst F."/>
            <person name="Ogasawara N."/>
            <person name="Moszer I."/>
            <person name="Albertini A.M."/>
            <person name="Alloni G."/>
            <person name="Azevedo V."/>
            <person name="Bertero M.G."/>
            <person name="Bessieres P."/>
            <person name="Bolotin A."/>
            <person name="Borchert S."/>
            <person name="Borriss R."/>
            <person name="Boursier L."/>
            <person name="Brans A."/>
            <person name="Braun M."/>
            <person name="Brignell S.C."/>
            <person name="Bron S."/>
            <person name="Brouillet S."/>
            <person name="Bruschi C.V."/>
            <person name="Caldwell B."/>
            <person name="Capuano V."/>
            <person name="Carter N.M."/>
            <person name="Choi S.-K."/>
            <person name="Codani J.-J."/>
            <person name="Connerton I.F."/>
            <person name="Cummings N.J."/>
            <person name="Daniel R.A."/>
            <person name="Denizot F."/>
            <person name="Devine K.M."/>
            <person name="Duesterhoeft A."/>
            <person name="Ehrlich S.D."/>
            <person name="Emmerson P.T."/>
            <person name="Entian K.-D."/>
            <person name="Errington J."/>
            <person name="Fabret C."/>
            <person name="Ferrari E."/>
            <person name="Foulger D."/>
            <person name="Fritz C."/>
            <person name="Fujita M."/>
            <person name="Fujita Y."/>
            <person name="Fuma S."/>
            <person name="Galizzi A."/>
            <person name="Galleron N."/>
            <person name="Ghim S.-Y."/>
            <person name="Glaser P."/>
            <person name="Goffeau A."/>
            <person name="Golightly E.J."/>
            <person name="Grandi G."/>
            <person name="Guiseppi G."/>
            <person name="Guy B.J."/>
            <person name="Haga K."/>
            <person name="Haiech J."/>
            <person name="Harwood C.R."/>
            <person name="Henaut A."/>
            <person name="Hilbert H."/>
            <person name="Holsappel S."/>
            <person name="Hosono S."/>
            <person name="Hullo M.-F."/>
            <person name="Itaya M."/>
            <person name="Jones L.-M."/>
            <person name="Joris B."/>
            <person name="Karamata D."/>
            <person name="Kasahara Y."/>
            <person name="Klaerr-Blanchard M."/>
            <person name="Klein C."/>
            <person name="Kobayashi Y."/>
            <person name="Koetter P."/>
            <person name="Koningstein G."/>
            <person name="Krogh S."/>
            <person name="Kumano M."/>
            <person name="Kurita K."/>
            <person name="Lapidus A."/>
            <person name="Lardinois S."/>
            <person name="Lauber J."/>
            <person name="Lazarevic V."/>
            <person name="Lee S.-M."/>
            <person name="Levine A."/>
            <person name="Liu H."/>
            <person name="Masuda S."/>
            <person name="Mauel C."/>
            <person name="Medigue C."/>
            <person name="Medina N."/>
            <person name="Mellado R.P."/>
            <person name="Mizuno M."/>
            <person name="Moestl D."/>
            <person name="Nakai S."/>
            <person name="Noback M."/>
            <person name="Noone D."/>
            <person name="O'Reilly M."/>
            <person name="Ogawa K."/>
            <person name="Ogiwara A."/>
            <person name="Oudega B."/>
            <person name="Park S.-H."/>
            <person name="Parro V."/>
            <person name="Pohl T.M."/>
            <person name="Portetelle D."/>
            <person name="Porwollik S."/>
            <person name="Prescott A.M."/>
            <person name="Presecan E."/>
            <person name="Pujic P."/>
            <person name="Purnelle B."/>
            <person name="Rapoport G."/>
            <person name="Rey M."/>
            <person name="Reynolds S."/>
            <person name="Rieger M."/>
            <person name="Rivolta C."/>
            <person name="Rocha E."/>
            <person name="Roche B."/>
            <person name="Rose M."/>
            <person name="Sadaie Y."/>
            <person name="Sato T."/>
            <person name="Scanlan E."/>
            <person name="Schleich S."/>
            <person name="Schroeter R."/>
            <person name="Scoffone F."/>
            <person name="Sekiguchi J."/>
            <person name="Sekowska A."/>
            <person name="Seror S.J."/>
            <person name="Serror P."/>
            <person name="Shin B.-S."/>
            <person name="Soldo B."/>
            <person name="Sorokin A."/>
            <person name="Tacconi E."/>
            <person name="Takagi T."/>
            <person name="Takahashi H."/>
            <person name="Takemaru K."/>
            <person name="Takeuchi M."/>
            <person name="Tamakoshi A."/>
            <person name="Tanaka T."/>
            <person name="Terpstra P."/>
            <person name="Tognoni A."/>
            <person name="Tosato V."/>
            <person name="Uchiyama S."/>
            <person name="Vandenbol M."/>
            <person name="Vannier F."/>
            <person name="Vassarotti A."/>
            <person name="Viari A."/>
            <person name="Wambutt R."/>
            <person name="Wedler E."/>
            <person name="Wedler H."/>
            <person name="Weitzenegger T."/>
            <person name="Winters P."/>
            <person name="Wipat A."/>
            <person name="Yamamoto H."/>
            <person name="Yamane K."/>
            <person name="Yasumoto K."/>
            <person name="Yata K."/>
            <person name="Yoshida K."/>
            <person name="Yoshikawa H.-F."/>
            <person name="Zumstein E."/>
            <person name="Yoshikawa H."/>
            <person name="Danchin A."/>
        </authorList>
    </citation>
    <scope>NUCLEOTIDE SEQUENCE [LARGE SCALE GENOMIC DNA]</scope>
    <source>
        <strain>168</strain>
    </source>
</reference>
<reference key="4">
    <citation type="journal article" date="2005" name="Mol. Microbiol.">
        <title>A master regulator for biofilm formation by Bacillus subtilis.</title>
        <authorList>
            <person name="Kearns D.B."/>
            <person name="Chu F."/>
            <person name="Branda S.S."/>
            <person name="Kolter R."/>
            <person name="Losick R."/>
        </authorList>
    </citation>
    <scope>PROBABLE FUNCTION</scope>
    <scope>INDUCTION</scope>
</reference>
<gene>
    <name type="primary">epsL</name>
    <name type="synonym">yvfC</name>
    <name type="ordered locus">BSU34250</name>
</gene>
<accession>P71062</accession>
<accession>O08180</accession>
<accession>Q795J1</accession>
<sequence>MILKRLFDLTAAIFLLCCTSVIILFTIAVVRLKIGSPVFFKQVRPGLHGKPFTLYKFRTMTDERDSKGNLLPDEVRLTKTGRLIRKLSIDELPQLLNVLKGDLSLVGPRPLLMDYLPLYTEKQARRHEVKPGITGWAQINGRNAISWEKKFELDVWYVDNWSFFLDLKILCLTVRKVLVSEGIQQTNHVTAERFTGSGDVSS</sequence>
<proteinExistence type="evidence at transcript level"/>
<evidence type="ECO:0000255" key="1"/>
<evidence type="ECO:0000269" key="2">
    <source>
    </source>
</evidence>
<evidence type="ECO:0000305" key="3"/>
<organism>
    <name type="scientific">Bacillus subtilis (strain 168)</name>
    <dbReference type="NCBI Taxonomy" id="224308"/>
    <lineage>
        <taxon>Bacteria</taxon>
        <taxon>Bacillati</taxon>
        <taxon>Bacillota</taxon>
        <taxon>Bacilli</taxon>
        <taxon>Bacillales</taxon>
        <taxon>Bacillaceae</taxon>
        <taxon>Bacillus</taxon>
    </lineage>
</organism>
<protein>
    <recommendedName>
        <fullName>Uncharacterized sugar transferase EpsL</fullName>
        <ecNumber>2.-.-.-</ecNumber>
    </recommendedName>
</protein>
<dbReference type="EC" id="2.-.-.-"/>
<dbReference type="EMBL" id="Z71928">
    <property type="protein sequence ID" value="CAA96480.1"/>
    <property type="molecule type" value="Genomic_DNA"/>
</dbReference>
<dbReference type="EMBL" id="Z94043">
    <property type="protein sequence ID" value="CAB07996.1"/>
    <property type="molecule type" value="Genomic_DNA"/>
</dbReference>
<dbReference type="EMBL" id="AL009126">
    <property type="protein sequence ID" value="CAB15430.1"/>
    <property type="molecule type" value="Genomic_DNA"/>
</dbReference>
<dbReference type="PIR" id="D70037">
    <property type="entry name" value="D70037"/>
</dbReference>
<dbReference type="RefSeq" id="NP_391305.1">
    <property type="nucleotide sequence ID" value="NC_000964.3"/>
</dbReference>
<dbReference type="RefSeq" id="WP_003243002.1">
    <property type="nucleotide sequence ID" value="NZ_OZ025638.1"/>
</dbReference>
<dbReference type="SMR" id="P71062"/>
<dbReference type="FunCoup" id="P71062">
    <property type="interactions" value="96"/>
</dbReference>
<dbReference type="STRING" id="224308.BSU34250"/>
<dbReference type="PaxDb" id="224308-BSU34250"/>
<dbReference type="EnsemblBacteria" id="CAB15430">
    <property type="protein sequence ID" value="CAB15430"/>
    <property type="gene ID" value="BSU_34250"/>
</dbReference>
<dbReference type="GeneID" id="936365"/>
<dbReference type="KEGG" id="bsu:BSU34250"/>
<dbReference type="PATRIC" id="fig|224308.179.peg.3712"/>
<dbReference type="eggNOG" id="COG2148">
    <property type="taxonomic scope" value="Bacteria"/>
</dbReference>
<dbReference type="InParanoid" id="P71062"/>
<dbReference type="OrthoDB" id="9808602at2"/>
<dbReference type="PhylomeDB" id="P71062"/>
<dbReference type="BioCyc" id="BSUB:BSU34250-MONOMER"/>
<dbReference type="Proteomes" id="UP000001570">
    <property type="component" value="Chromosome"/>
</dbReference>
<dbReference type="GO" id="GO:0005886">
    <property type="term" value="C:plasma membrane"/>
    <property type="evidence" value="ECO:0007669"/>
    <property type="project" value="UniProtKB-SubCell"/>
</dbReference>
<dbReference type="GO" id="GO:0016780">
    <property type="term" value="F:phosphotransferase activity, for other substituted phosphate groups"/>
    <property type="evidence" value="ECO:0000318"/>
    <property type="project" value="GO_Central"/>
</dbReference>
<dbReference type="GO" id="GO:0000271">
    <property type="term" value="P:polysaccharide biosynthetic process"/>
    <property type="evidence" value="ECO:0007669"/>
    <property type="project" value="UniProtKB-KW"/>
</dbReference>
<dbReference type="InterPro" id="IPR003362">
    <property type="entry name" value="Bact_transf"/>
</dbReference>
<dbReference type="PANTHER" id="PTHR30576">
    <property type="entry name" value="COLANIC BIOSYNTHESIS UDP-GLUCOSE LIPID CARRIER TRANSFERASE"/>
    <property type="match status" value="1"/>
</dbReference>
<dbReference type="PANTHER" id="PTHR30576:SF8">
    <property type="entry name" value="UNDECAPRENYL-PHOSPHATE GALACTOSE PHOSPHOTRANSFERASE"/>
    <property type="match status" value="1"/>
</dbReference>
<dbReference type="Pfam" id="PF02397">
    <property type="entry name" value="Bac_transf"/>
    <property type="match status" value="1"/>
</dbReference>
<name>EPSL_BACSU</name>